<organismHost>
    <name type="scientific">Ornithodoros</name>
    <name type="common">relapsing fever ticks</name>
    <dbReference type="NCBI Taxonomy" id="6937"/>
</organismHost>
<organismHost>
    <name type="scientific">Sus scrofa</name>
    <name type="common">Pig</name>
    <dbReference type="NCBI Taxonomy" id="9823"/>
</organismHost>
<feature type="chain" id="PRO_0000373178" description="Protein MGF 100-3L">
    <location>
        <begin position="1"/>
        <end position="146"/>
    </location>
</feature>
<accession>Q65210</accession>
<gene>
    <name type="ordered locus">BA71V-152</name>
    <name evidence="3" type="ORF">DP146L</name>
</gene>
<organism>
    <name type="scientific">African swine fever virus (strain Badajoz 1971 Vero-adapted)</name>
    <name type="common">Ba71V</name>
    <name type="synonym">ASFV</name>
    <dbReference type="NCBI Taxonomy" id="10498"/>
    <lineage>
        <taxon>Viruses</taxon>
        <taxon>Varidnaviria</taxon>
        <taxon>Bamfordvirae</taxon>
        <taxon>Nucleocytoviricota</taxon>
        <taxon>Pokkesviricetes</taxon>
        <taxon>Asfuvirales</taxon>
        <taxon>Asfarviridae</taxon>
        <taxon>Asfivirus</taxon>
        <taxon>African swine fever virus</taxon>
    </lineage>
</organism>
<proteinExistence type="evidence at transcript level"/>
<evidence type="ECO:0000250" key="1"/>
<evidence type="ECO:0000269" key="2">
    <source>
    </source>
</evidence>
<evidence type="ECO:0000305" key="3"/>
<dbReference type="EMBL" id="U18466">
    <property type="protein sequence ID" value="AAA65378.1"/>
    <property type="molecule type" value="Genomic_DNA"/>
</dbReference>
<dbReference type="RefSeq" id="NP_042842.1">
    <property type="nucleotide sequence ID" value="NC_001659.2"/>
</dbReference>
<dbReference type="SMR" id="Q65210"/>
<dbReference type="GeneID" id="22220378"/>
<dbReference type="KEGG" id="vg:22220378"/>
<dbReference type="Proteomes" id="UP000000624">
    <property type="component" value="Segment"/>
</dbReference>
<dbReference type="InterPro" id="IPR036860">
    <property type="entry name" value="SH2_dom_sf"/>
</dbReference>
<dbReference type="SUPFAM" id="SSF55550">
    <property type="entry name" value="SH2 domain"/>
    <property type="match status" value="1"/>
</dbReference>
<reference key="1">
    <citation type="journal article" date="1990" name="J. Virol.">
        <title>Multigene families in African swine fever virus: family 360.</title>
        <authorList>
            <person name="Gonzalez A."/>
            <person name="Calvo V."/>
            <person name="Almazan F."/>
            <person name="Almendral J.M."/>
            <person name="Ramirez J.C."/>
            <person name="de la Vega I."/>
            <person name="Blasco R."/>
            <person name="Vinuela E."/>
        </authorList>
    </citation>
    <scope>NUCLEOTIDE SEQUENCE [GENOMIC DNA]</scope>
</reference>
<reference key="2">
    <citation type="journal article" date="1995" name="Virology">
        <title>Analysis of the complete nucleotide sequence of African swine fever virus.</title>
        <authorList>
            <person name="Yanez R.J."/>
            <person name="Rodriguez J.M."/>
            <person name="Nogal M.L."/>
            <person name="Yuste L."/>
            <person name="Enriquez C."/>
            <person name="Rodriguez J.F."/>
            <person name="Vinuela E."/>
        </authorList>
    </citation>
    <scope>NUCLEOTIDE SEQUENCE [LARGE SCALE GENOMIC DNA]</scope>
</reference>
<reference key="3">
    <citation type="journal article" date="2020" name="J. Virol.">
        <title>The African Swine Fever Virus Transcriptome.</title>
        <authorList>
            <person name="Cackett G."/>
            <person name="Matelska D."/>
            <person name="Sykora M."/>
            <person name="Portugal R."/>
            <person name="Malecki M."/>
            <person name="Baehler J."/>
            <person name="Dixon L."/>
            <person name="Werner F."/>
        </authorList>
    </citation>
    <scope>INDUCTION</scope>
</reference>
<protein>
    <recommendedName>
        <fullName>Protein MGF 100-3L</fullName>
    </recommendedName>
</protein>
<name>1003L_ASFB7</name>
<sequence length="146" mass="17258">MGNRLIRSYLPNTVMSIEDKQNKYNETIEDSKICNKVYIKQSGKIDKQELTRIKKLGFFYSQKSDHEIERMLFSMPNGTFLLTDDATNENIFIVQKDLENGSLNIAKLEFKGKALYINGKDYYSLENYLKTFEDFYKYPLIYNKNK</sequence>
<keyword id="KW-0244">Early protein</keyword>
<keyword id="KW-1185">Reference proteome</keyword>
<comment type="function">
    <text evidence="1">Plays a role in virus cell tropism, and may be required for efficient virus replication in macrophages.</text>
</comment>
<comment type="induction">
    <text evidence="2">Expressed in the early phase of the viral replicative cycle.</text>
</comment>
<comment type="similarity">
    <text evidence="3">Belongs to the asfivirus MGF 100 family.</text>
</comment>